<comment type="function">
    <text evidence="1">Allows the formation of correctly charged Gln-tRNA(Gln) through the transamidation of misacylated Glu-tRNA(Gln) in organisms which lack glutaminyl-tRNA synthetase. The reaction takes place in the presence of glutamine and ATP through an activated gamma-phospho-Glu-tRNA(Gln).</text>
</comment>
<comment type="catalytic activity">
    <reaction evidence="1">
        <text>L-glutamyl-tRNA(Gln) + L-glutamine + ATP + H2O = L-glutaminyl-tRNA(Gln) + L-glutamate + ADP + phosphate + H(+)</text>
        <dbReference type="Rhea" id="RHEA:17521"/>
        <dbReference type="Rhea" id="RHEA-COMP:9681"/>
        <dbReference type="Rhea" id="RHEA-COMP:9684"/>
        <dbReference type="ChEBI" id="CHEBI:15377"/>
        <dbReference type="ChEBI" id="CHEBI:15378"/>
        <dbReference type="ChEBI" id="CHEBI:29985"/>
        <dbReference type="ChEBI" id="CHEBI:30616"/>
        <dbReference type="ChEBI" id="CHEBI:43474"/>
        <dbReference type="ChEBI" id="CHEBI:58359"/>
        <dbReference type="ChEBI" id="CHEBI:78520"/>
        <dbReference type="ChEBI" id="CHEBI:78521"/>
        <dbReference type="ChEBI" id="CHEBI:456216"/>
        <dbReference type="EC" id="6.3.5.7"/>
    </reaction>
</comment>
<comment type="subunit">
    <text evidence="1">Heterotrimer of A, B and C subunits.</text>
</comment>
<comment type="similarity">
    <text evidence="1">Belongs to the amidase family. GatA subfamily.</text>
</comment>
<evidence type="ECO:0000255" key="1">
    <source>
        <dbReference type="HAMAP-Rule" id="MF_00120"/>
    </source>
</evidence>
<sequence length="471" mass="50314">MLAHEIRARVARGEVSPLEVAQAYLKRVQELDPGLGAFLSLNERLLEEAEAVDPGLPLAGLVVAVKDNIATRGLRTTAGSRLLENFVPPYEATAVARLKALGALVLGKTNLDEFGMGSSTEHSAFFPTKNPFDPDRVPGGSSGGSAAALAADLAPLALGSDTGGSVRQPAAFCGVYGLKPTYGRVSRFGLIAYASSLDQIGPMARSVRDLALLMDAVAGPDPLDATSLDLPPRFQEALEGPLPPLRLGVVREALAGNSPGVERALEEALKVFRELGLSVREVSWPSLPQALAAYYILAPAEASSNLARYDGTLYGRRAEGEEVEGMMEATRALFGLEVKRRVLVGTFVLSSGYYEAYYGRAQAFRRRLKAEAQALFREVDLLLLPTTPHPAFPFGARRDPLAMYREDLYTVGANLTGLPALSFPAGFEGHLPVGLQLLAPWGEDERLLRAALAFEEATARAHLKAPLGEAL</sequence>
<proteinExistence type="inferred from homology"/>
<organism>
    <name type="scientific">Thermus thermophilus (strain ATCC BAA-163 / DSM 7039 / HB27)</name>
    <dbReference type="NCBI Taxonomy" id="262724"/>
    <lineage>
        <taxon>Bacteria</taxon>
        <taxon>Thermotogati</taxon>
        <taxon>Deinococcota</taxon>
        <taxon>Deinococci</taxon>
        <taxon>Thermales</taxon>
        <taxon>Thermaceae</taxon>
        <taxon>Thermus</taxon>
    </lineage>
</organism>
<feature type="chain" id="PRO_0000241171" description="Glutamyl-tRNA(Gln) amidotransferase subunit A">
    <location>
        <begin position="1"/>
        <end position="471"/>
    </location>
</feature>
<feature type="active site" description="Charge relay system" evidence="1">
    <location>
        <position position="66"/>
    </location>
</feature>
<feature type="active site" description="Charge relay system" evidence="1">
    <location>
        <position position="141"/>
    </location>
</feature>
<feature type="active site" description="Acyl-ester intermediate" evidence="1">
    <location>
        <position position="165"/>
    </location>
</feature>
<name>GATA_THET2</name>
<keyword id="KW-0067">ATP-binding</keyword>
<keyword id="KW-0436">Ligase</keyword>
<keyword id="KW-0547">Nucleotide-binding</keyword>
<keyword id="KW-0648">Protein biosynthesis</keyword>
<dbReference type="EC" id="6.3.5.7" evidence="1"/>
<dbReference type="EMBL" id="AE017221">
    <property type="protein sequence ID" value="AAS80553.1"/>
    <property type="molecule type" value="Genomic_DNA"/>
</dbReference>
<dbReference type="RefSeq" id="WP_011172658.1">
    <property type="nucleotide sequence ID" value="NC_005835.1"/>
</dbReference>
<dbReference type="SMR" id="Q72L58"/>
<dbReference type="KEGG" id="tth:TT_C0205"/>
<dbReference type="eggNOG" id="COG0154">
    <property type="taxonomic scope" value="Bacteria"/>
</dbReference>
<dbReference type="HOGENOM" id="CLU_009600_0_3_0"/>
<dbReference type="OrthoDB" id="9811471at2"/>
<dbReference type="Proteomes" id="UP000000592">
    <property type="component" value="Chromosome"/>
</dbReference>
<dbReference type="GO" id="GO:0030956">
    <property type="term" value="C:glutamyl-tRNA(Gln) amidotransferase complex"/>
    <property type="evidence" value="ECO:0007669"/>
    <property type="project" value="InterPro"/>
</dbReference>
<dbReference type="GO" id="GO:0005524">
    <property type="term" value="F:ATP binding"/>
    <property type="evidence" value="ECO:0007669"/>
    <property type="project" value="UniProtKB-KW"/>
</dbReference>
<dbReference type="GO" id="GO:0050567">
    <property type="term" value="F:glutaminyl-tRNA synthase (glutamine-hydrolyzing) activity"/>
    <property type="evidence" value="ECO:0007669"/>
    <property type="project" value="UniProtKB-UniRule"/>
</dbReference>
<dbReference type="GO" id="GO:0006412">
    <property type="term" value="P:translation"/>
    <property type="evidence" value="ECO:0007669"/>
    <property type="project" value="UniProtKB-UniRule"/>
</dbReference>
<dbReference type="Gene3D" id="3.90.1300.10">
    <property type="entry name" value="Amidase signature (AS) domain"/>
    <property type="match status" value="1"/>
</dbReference>
<dbReference type="HAMAP" id="MF_00120">
    <property type="entry name" value="GatA"/>
    <property type="match status" value="1"/>
</dbReference>
<dbReference type="InterPro" id="IPR000120">
    <property type="entry name" value="Amidase"/>
</dbReference>
<dbReference type="InterPro" id="IPR020556">
    <property type="entry name" value="Amidase_CS"/>
</dbReference>
<dbReference type="InterPro" id="IPR023631">
    <property type="entry name" value="Amidase_dom"/>
</dbReference>
<dbReference type="InterPro" id="IPR036928">
    <property type="entry name" value="AS_sf"/>
</dbReference>
<dbReference type="InterPro" id="IPR004412">
    <property type="entry name" value="GatA"/>
</dbReference>
<dbReference type="NCBIfam" id="TIGR00132">
    <property type="entry name" value="gatA"/>
    <property type="match status" value="1"/>
</dbReference>
<dbReference type="PANTHER" id="PTHR11895:SF151">
    <property type="entry name" value="GLUTAMYL-TRNA(GLN) AMIDOTRANSFERASE SUBUNIT A"/>
    <property type="match status" value="1"/>
</dbReference>
<dbReference type="PANTHER" id="PTHR11895">
    <property type="entry name" value="TRANSAMIDASE"/>
    <property type="match status" value="1"/>
</dbReference>
<dbReference type="Pfam" id="PF01425">
    <property type="entry name" value="Amidase"/>
    <property type="match status" value="1"/>
</dbReference>
<dbReference type="SUPFAM" id="SSF75304">
    <property type="entry name" value="Amidase signature (AS) enzymes"/>
    <property type="match status" value="1"/>
</dbReference>
<dbReference type="PROSITE" id="PS00571">
    <property type="entry name" value="AMIDASES"/>
    <property type="match status" value="1"/>
</dbReference>
<accession>Q72L58</accession>
<protein>
    <recommendedName>
        <fullName evidence="1">Glutamyl-tRNA(Gln) amidotransferase subunit A</fullName>
        <shortName evidence="1">Glu-ADT subunit A</shortName>
        <ecNumber evidence="1">6.3.5.7</ecNumber>
    </recommendedName>
</protein>
<gene>
    <name evidence="1" type="primary">gatA</name>
    <name type="ordered locus">TT_C0205</name>
</gene>
<reference key="1">
    <citation type="journal article" date="2004" name="Nat. Biotechnol.">
        <title>The genome sequence of the extreme thermophile Thermus thermophilus.</title>
        <authorList>
            <person name="Henne A."/>
            <person name="Brueggemann H."/>
            <person name="Raasch C."/>
            <person name="Wiezer A."/>
            <person name="Hartsch T."/>
            <person name="Liesegang H."/>
            <person name="Johann A."/>
            <person name="Lienard T."/>
            <person name="Gohl O."/>
            <person name="Martinez-Arias R."/>
            <person name="Jacobi C."/>
            <person name="Starkuviene V."/>
            <person name="Schlenczeck S."/>
            <person name="Dencker S."/>
            <person name="Huber R."/>
            <person name="Klenk H.-P."/>
            <person name="Kramer W."/>
            <person name="Merkl R."/>
            <person name="Gottschalk G."/>
            <person name="Fritz H.-J."/>
        </authorList>
    </citation>
    <scope>NUCLEOTIDE SEQUENCE [LARGE SCALE GENOMIC DNA]</scope>
    <source>
        <strain>ATCC BAA-163 / DSM 7039 / HB27</strain>
    </source>
</reference>